<dbReference type="EMBL" id="Y18930">
    <property type="protein sequence ID" value="CAB57535.1"/>
    <property type="molecule type" value="Genomic_DNA"/>
</dbReference>
<dbReference type="EMBL" id="AE006641">
    <property type="protein sequence ID" value="AAK41065.1"/>
    <property type="molecule type" value="Genomic_DNA"/>
</dbReference>
<dbReference type="PIR" id="B90226">
    <property type="entry name" value="B90226"/>
</dbReference>
<dbReference type="RefSeq" id="WP_009991357.1">
    <property type="nucleotide sequence ID" value="NC_002754.1"/>
</dbReference>
<dbReference type="SMR" id="Q9UXF5"/>
<dbReference type="FunCoup" id="Q9UXF5">
    <property type="interactions" value="150"/>
</dbReference>
<dbReference type="STRING" id="273057.SSO0768"/>
<dbReference type="PaxDb" id="273057-SSO0768"/>
<dbReference type="EnsemblBacteria" id="AAK41065">
    <property type="protein sequence ID" value="AAK41065"/>
    <property type="gene ID" value="SSO0768"/>
</dbReference>
<dbReference type="KEGG" id="sso:SSO0768"/>
<dbReference type="PATRIC" id="fig|273057.12.peg.767"/>
<dbReference type="eggNOG" id="arCOG00469">
    <property type="taxonomic scope" value="Archaea"/>
</dbReference>
<dbReference type="HOGENOM" id="CLU_042324_2_1_2"/>
<dbReference type="InParanoid" id="Q9UXF5"/>
<dbReference type="PhylomeDB" id="Q9UXF5"/>
<dbReference type="BRENDA" id="3.6.4.B8">
    <property type="organism ID" value="6163"/>
</dbReference>
<dbReference type="Proteomes" id="UP000001974">
    <property type="component" value="Chromosome"/>
</dbReference>
<dbReference type="GO" id="GO:0005663">
    <property type="term" value="C:DNA replication factor C complex"/>
    <property type="evidence" value="ECO:0000318"/>
    <property type="project" value="GO_Central"/>
</dbReference>
<dbReference type="GO" id="GO:0005524">
    <property type="term" value="F:ATP binding"/>
    <property type="evidence" value="ECO:0007669"/>
    <property type="project" value="UniProtKB-UniRule"/>
</dbReference>
<dbReference type="GO" id="GO:0016887">
    <property type="term" value="F:ATP hydrolysis activity"/>
    <property type="evidence" value="ECO:0007669"/>
    <property type="project" value="InterPro"/>
</dbReference>
<dbReference type="GO" id="GO:0003677">
    <property type="term" value="F:DNA binding"/>
    <property type="evidence" value="ECO:0007669"/>
    <property type="project" value="InterPro"/>
</dbReference>
<dbReference type="GO" id="GO:0003689">
    <property type="term" value="F:DNA clamp loader activity"/>
    <property type="evidence" value="ECO:0007669"/>
    <property type="project" value="UniProtKB-UniRule"/>
</dbReference>
<dbReference type="GO" id="GO:0006281">
    <property type="term" value="P:DNA repair"/>
    <property type="evidence" value="ECO:0000318"/>
    <property type="project" value="GO_Central"/>
</dbReference>
<dbReference type="GO" id="GO:0006261">
    <property type="term" value="P:DNA-templated DNA replication"/>
    <property type="evidence" value="ECO:0000318"/>
    <property type="project" value="GO_Central"/>
</dbReference>
<dbReference type="CDD" id="cd00009">
    <property type="entry name" value="AAA"/>
    <property type="match status" value="1"/>
</dbReference>
<dbReference type="CDD" id="cd18140">
    <property type="entry name" value="HLD_clamp_RFC"/>
    <property type="match status" value="1"/>
</dbReference>
<dbReference type="FunFam" id="1.20.272.10:FF:000029">
    <property type="entry name" value="Replication factor C small subunit"/>
    <property type="match status" value="1"/>
</dbReference>
<dbReference type="FunFam" id="3.40.50.300:FF:000129">
    <property type="entry name" value="Replication factor C subunit 5"/>
    <property type="match status" value="1"/>
</dbReference>
<dbReference type="Gene3D" id="1.10.8.60">
    <property type="match status" value="1"/>
</dbReference>
<dbReference type="Gene3D" id="1.20.272.10">
    <property type="match status" value="1"/>
</dbReference>
<dbReference type="Gene3D" id="3.40.50.300">
    <property type="entry name" value="P-loop containing nucleotide triphosphate hydrolases"/>
    <property type="match status" value="1"/>
</dbReference>
<dbReference type="HAMAP" id="MF_01509">
    <property type="entry name" value="RfcS"/>
    <property type="match status" value="1"/>
</dbReference>
<dbReference type="InterPro" id="IPR003593">
    <property type="entry name" value="AAA+_ATPase"/>
</dbReference>
<dbReference type="InterPro" id="IPR003959">
    <property type="entry name" value="ATPase_AAA_core"/>
</dbReference>
<dbReference type="InterPro" id="IPR008921">
    <property type="entry name" value="DNA_pol3_clamp-load_cplx_C"/>
</dbReference>
<dbReference type="InterPro" id="IPR050238">
    <property type="entry name" value="DNA_Rep/Repair_Clamp_Loader"/>
</dbReference>
<dbReference type="InterPro" id="IPR027417">
    <property type="entry name" value="P-loop_NTPase"/>
</dbReference>
<dbReference type="InterPro" id="IPR023748">
    <property type="entry name" value="Rep_factor-C_ssu_arc"/>
</dbReference>
<dbReference type="InterPro" id="IPR013748">
    <property type="entry name" value="Rep_factorC_C"/>
</dbReference>
<dbReference type="InterPro" id="IPR047854">
    <property type="entry name" value="RFC_lid"/>
</dbReference>
<dbReference type="NCBIfam" id="NF001679">
    <property type="entry name" value="PRK00440.1"/>
    <property type="match status" value="1"/>
</dbReference>
<dbReference type="PANTHER" id="PTHR11669">
    <property type="entry name" value="REPLICATION FACTOR C / DNA POLYMERASE III GAMMA-TAU SUBUNIT"/>
    <property type="match status" value="1"/>
</dbReference>
<dbReference type="PANTHER" id="PTHR11669:SF20">
    <property type="entry name" value="REPLICATION FACTOR C SUBUNIT 4"/>
    <property type="match status" value="1"/>
</dbReference>
<dbReference type="Pfam" id="PF00004">
    <property type="entry name" value="AAA"/>
    <property type="match status" value="1"/>
</dbReference>
<dbReference type="Pfam" id="PF08542">
    <property type="entry name" value="Rep_fac_C"/>
    <property type="match status" value="1"/>
</dbReference>
<dbReference type="SMART" id="SM00382">
    <property type="entry name" value="AAA"/>
    <property type="match status" value="1"/>
</dbReference>
<dbReference type="SUPFAM" id="SSF52540">
    <property type="entry name" value="P-loop containing nucleoside triphosphate hydrolases"/>
    <property type="match status" value="1"/>
</dbReference>
<dbReference type="SUPFAM" id="SSF48019">
    <property type="entry name" value="post-AAA+ oligomerization domain-like"/>
    <property type="match status" value="1"/>
</dbReference>
<organism>
    <name type="scientific">Saccharolobus solfataricus (strain ATCC 35092 / DSM 1617 / JCM 11322 / P2)</name>
    <name type="common">Sulfolobus solfataricus</name>
    <dbReference type="NCBI Taxonomy" id="273057"/>
    <lineage>
        <taxon>Archaea</taxon>
        <taxon>Thermoproteota</taxon>
        <taxon>Thermoprotei</taxon>
        <taxon>Sulfolobales</taxon>
        <taxon>Sulfolobaceae</taxon>
        <taxon>Saccharolobus</taxon>
    </lineage>
</organism>
<sequence length="330" mass="37741">MSTKVEEILWAEKYRPKTLDDIVNQREIIDRLKKFVKEKNMPHLLFAGPPGTGKTTAALALVHDLYGDNYTEYFLELNASDERGIDVIRNKVKEFARTVIPGDIPFKVVLLDEADNMTADAQQALRRTMELYTENTRFILACNYLSKIIEPIQSRTALFRFYPLKKEDVVNRLIYIAKNEKAEYDQKALETIYDITMGDMRKSINILQAASAYGKISVEAVFKVLGLAQPKEVREMINLALQGKFTQARDKLRTLLITYGLSGEDIVKQIHREITSSEIQISEELRVLLLDYIGETEFRIIEGADDEIQLSALLAKMAIYGNKYIGSENR</sequence>
<accession>Q9UXF5</accession>
<keyword id="KW-0067">ATP-binding</keyword>
<keyword id="KW-0235">DNA replication</keyword>
<keyword id="KW-0547">Nucleotide-binding</keyword>
<keyword id="KW-1185">Reference proteome</keyword>
<proteinExistence type="evidence at protein level"/>
<name>RFCS_SACS2</name>
<gene>
    <name type="primary">rfcS</name>
    <name type="ordered locus">SSO0768</name>
    <name type="ORF">C40_004</name>
</gene>
<reference key="1">
    <citation type="journal article" date="2000" name="Genome">
        <title>Gene content and organization of a 281-kbp contig from the genome of the extremely thermophilic archaeon, Sulfolobus solfataricus P2.</title>
        <authorList>
            <person name="Charlebois R.L."/>
            <person name="Singh R.K."/>
            <person name="Chan-Weiher C.C.-Y."/>
            <person name="Allard G."/>
            <person name="Chow C."/>
            <person name="Confalonieri F."/>
            <person name="Curtis B."/>
            <person name="Duguet M."/>
            <person name="Erauso G."/>
            <person name="Faguy D."/>
            <person name="Gaasterland T."/>
            <person name="Garrett R.A."/>
            <person name="Gordon P."/>
            <person name="Jeffries A.C."/>
            <person name="Kozera C."/>
            <person name="Kushwaha N."/>
            <person name="Lafleur E."/>
            <person name="Medina N."/>
            <person name="Peng X."/>
            <person name="Penny S.L."/>
            <person name="She Q."/>
            <person name="St Jean A."/>
            <person name="van der Oost J."/>
            <person name="Young F."/>
            <person name="Zivanovic Y."/>
            <person name="Doolittle W.F."/>
            <person name="Ragan M.A."/>
            <person name="Sensen C.W."/>
        </authorList>
    </citation>
    <scope>NUCLEOTIDE SEQUENCE [LARGE SCALE GENOMIC DNA]</scope>
    <source>
        <strain>ATCC 35092 / DSM 1617 / JCM 11322 / P2</strain>
    </source>
</reference>
<reference key="2">
    <citation type="journal article" date="2001" name="Proc. Natl. Acad. Sci. U.S.A.">
        <title>The complete genome of the crenarchaeon Sulfolobus solfataricus P2.</title>
        <authorList>
            <person name="She Q."/>
            <person name="Singh R.K."/>
            <person name="Confalonieri F."/>
            <person name="Zivanovic Y."/>
            <person name="Allard G."/>
            <person name="Awayez M.J."/>
            <person name="Chan-Weiher C.C.-Y."/>
            <person name="Clausen I.G."/>
            <person name="Curtis B.A."/>
            <person name="De Moors A."/>
            <person name="Erauso G."/>
            <person name="Fletcher C."/>
            <person name="Gordon P.M.K."/>
            <person name="Heikamp-de Jong I."/>
            <person name="Jeffries A.C."/>
            <person name="Kozera C.J."/>
            <person name="Medina N."/>
            <person name="Peng X."/>
            <person name="Thi-Ngoc H.P."/>
            <person name="Redder P."/>
            <person name="Schenk M.E."/>
            <person name="Theriault C."/>
            <person name="Tolstrup N."/>
            <person name="Charlebois R.L."/>
            <person name="Doolittle W.F."/>
            <person name="Duguet M."/>
            <person name="Gaasterland T."/>
            <person name="Garrett R.A."/>
            <person name="Ragan M.A."/>
            <person name="Sensen C.W."/>
            <person name="Van der Oost J."/>
        </authorList>
    </citation>
    <scope>NUCLEOTIDE SEQUENCE [LARGE SCALE GENOMIC DNA]</scope>
    <source>
        <strain>ATCC 35092 / DSM 1617 / JCM 11322 / P2</strain>
    </source>
</reference>
<reference key="3">
    <citation type="journal article" date="2000" name="J. Mol. Biol.">
        <title>Biochemical characterization of a clamp-loader complex homologous to eukaryotic replication factor C from the hyperthermophilic archaeon Sulfolobus solfataricus.</title>
        <authorList>
            <person name="Pisani F.M."/>
            <person name="De Felice M."/>
            <person name="Carpentieri F."/>
            <person name="Rossi M."/>
        </authorList>
    </citation>
    <scope>FUNCTION</scope>
    <scope>SUBUNIT</scope>
</reference>
<reference key="4">
    <citation type="journal article" date="2003" name="Mol. Cell">
        <title>A heterotrimeric PCNA in the hyperthermophilic archaeon Sulfolobus solfataricus.</title>
        <authorList>
            <person name="Dionne I."/>
            <person name="Nookala R.K."/>
            <person name="Jackson S.P."/>
            <person name="Doherty A.J."/>
            <person name="Bell S.D."/>
        </authorList>
    </citation>
    <scope>FUNCTION</scope>
    <scope>INTERACTION WITH PCNA1 AND PCNA2</scope>
    <scope>SUBUNIT</scope>
</reference>
<evidence type="ECO:0000255" key="1"/>
<evidence type="ECO:0000269" key="2">
    <source>
    </source>
</evidence>
<evidence type="ECO:0000269" key="3">
    <source>
    </source>
</evidence>
<evidence type="ECO:0000305" key="4"/>
<protein>
    <recommendedName>
        <fullName>Replication factor C small subunit</fullName>
        <shortName>RFC small subunit</shortName>
    </recommendedName>
    <alternativeName>
        <fullName>Clamp loader small subunit</fullName>
    </alternativeName>
    <alternativeName>
        <fullName>SsoRFC small subunit</fullName>
    </alternativeName>
</protein>
<comment type="function">
    <text evidence="2 3">Part of the RFC clamp loader complex which loads the PCNA sliding clamp onto DNA. The complex possesses DNA-dependent ATPase activity.</text>
</comment>
<comment type="subunit">
    <text evidence="2 3">Heteropentamer composed of four small subunits (RfcS) and one large subunit (RfcL). A homotetramer of this subunit interacts with PCNA heterodimer PCNA1-PCNA2.</text>
</comment>
<comment type="similarity">
    <text evidence="4">Belongs to the activator 1 small subunits family. RfcS subfamily.</text>
</comment>
<feature type="chain" id="PRO_0000135984" description="Replication factor C small subunit">
    <location>
        <begin position="1"/>
        <end position="330"/>
    </location>
</feature>
<feature type="binding site" evidence="1">
    <location>
        <begin position="48"/>
        <end position="55"/>
    </location>
    <ligand>
        <name>ATP</name>
        <dbReference type="ChEBI" id="CHEBI:30616"/>
    </ligand>
</feature>